<accession>C0Q328</accession>
<protein>
    <recommendedName>
        <fullName evidence="1">Na(+)/H(+) antiporter NhaB</fullName>
    </recommendedName>
    <alternativeName>
        <fullName evidence="1">Sodium/proton antiporter NhaB</fullName>
    </alternativeName>
</protein>
<comment type="function">
    <text evidence="1">Na(+)/H(+) antiporter that extrudes sodium in exchange for external protons.</text>
</comment>
<comment type="catalytic activity">
    <reaction evidence="1">
        <text>2 Na(+)(in) + 3 H(+)(out) = 2 Na(+)(out) + 3 H(+)(in)</text>
        <dbReference type="Rhea" id="RHEA:29247"/>
        <dbReference type="ChEBI" id="CHEBI:15378"/>
        <dbReference type="ChEBI" id="CHEBI:29101"/>
    </reaction>
    <physiologicalReaction direction="left-to-right" evidence="1">
        <dbReference type="Rhea" id="RHEA:29248"/>
    </physiologicalReaction>
</comment>
<comment type="subcellular location">
    <subcellularLocation>
        <location evidence="1">Cell inner membrane</location>
        <topology evidence="1">Multi-pass membrane protein</topology>
    </subcellularLocation>
</comment>
<comment type="similarity">
    <text evidence="1">Belongs to the NhaB Na(+)/H(+) (TC 2.A.34) antiporter family.</text>
</comment>
<reference key="1">
    <citation type="journal article" date="2009" name="PLoS ONE">
        <title>Salmonella paratyphi C: genetic divergence from Salmonella choleraesuis and pathogenic convergence with Salmonella typhi.</title>
        <authorList>
            <person name="Liu W.-Q."/>
            <person name="Feng Y."/>
            <person name="Wang Y."/>
            <person name="Zou Q.-H."/>
            <person name="Chen F."/>
            <person name="Guo J.-T."/>
            <person name="Peng Y.-H."/>
            <person name="Jin Y."/>
            <person name="Li Y.-G."/>
            <person name="Hu S.-N."/>
            <person name="Johnston R.N."/>
            <person name="Liu G.-R."/>
            <person name="Liu S.-L."/>
        </authorList>
    </citation>
    <scope>NUCLEOTIDE SEQUENCE [LARGE SCALE GENOMIC DNA]</scope>
    <source>
        <strain>RKS4594</strain>
    </source>
</reference>
<gene>
    <name evidence="1" type="primary">nhaB</name>
    <name type="ordered locus">SPC_1923</name>
</gene>
<feature type="chain" id="PRO_1000185779" description="Na(+)/H(+) antiporter NhaB">
    <location>
        <begin position="1"/>
        <end position="514"/>
    </location>
</feature>
<feature type="transmembrane region" description="Helical" evidence="1">
    <location>
        <begin position="23"/>
        <end position="43"/>
    </location>
</feature>
<feature type="transmembrane region" description="Helical" evidence="1">
    <location>
        <begin position="63"/>
        <end position="83"/>
    </location>
</feature>
<feature type="transmembrane region" description="Helical" evidence="1">
    <location>
        <begin position="97"/>
        <end position="117"/>
    </location>
</feature>
<feature type="transmembrane region" description="Helical" evidence="1">
    <location>
        <begin position="120"/>
        <end position="140"/>
    </location>
</feature>
<feature type="transmembrane region" description="Helical" evidence="1">
    <location>
        <begin position="144"/>
        <end position="164"/>
    </location>
</feature>
<feature type="transmembrane region" description="Helical" evidence="1">
    <location>
        <begin position="202"/>
        <end position="222"/>
    </location>
</feature>
<feature type="transmembrane region" description="Helical" evidence="1">
    <location>
        <begin position="238"/>
        <end position="258"/>
    </location>
</feature>
<feature type="transmembrane region" description="Helical" evidence="1">
    <location>
        <begin position="303"/>
        <end position="323"/>
    </location>
</feature>
<feature type="transmembrane region" description="Helical" evidence="1">
    <location>
        <begin position="357"/>
        <end position="377"/>
    </location>
</feature>
<feature type="transmembrane region" description="Helical" evidence="1">
    <location>
        <begin position="391"/>
        <end position="411"/>
    </location>
</feature>
<feature type="transmembrane region" description="Helical" evidence="1">
    <location>
        <begin position="447"/>
        <end position="467"/>
    </location>
</feature>
<feature type="transmembrane region" description="Helical" evidence="1">
    <location>
        <begin position="475"/>
        <end position="495"/>
    </location>
</feature>
<organism>
    <name type="scientific">Salmonella paratyphi C (strain RKS4594)</name>
    <dbReference type="NCBI Taxonomy" id="476213"/>
    <lineage>
        <taxon>Bacteria</taxon>
        <taxon>Pseudomonadati</taxon>
        <taxon>Pseudomonadota</taxon>
        <taxon>Gammaproteobacteria</taxon>
        <taxon>Enterobacterales</taxon>
        <taxon>Enterobacteriaceae</taxon>
        <taxon>Salmonella</taxon>
    </lineage>
</organism>
<dbReference type="EMBL" id="CP000857">
    <property type="protein sequence ID" value="ACN46060.1"/>
    <property type="molecule type" value="Genomic_DNA"/>
</dbReference>
<dbReference type="RefSeq" id="WP_000406438.1">
    <property type="nucleotide sequence ID" value="NC_012125.1"/>
</dbReference>
<dbReference type="SMR" id="C0Q328"/>
<dbReference type="KEGG" id="sei:SPC_1923"/>
<dbReference type="HOGENOM" id="CLU_041110_0_0_6"/>
<dbReference type="Proteomes" id="UP000001599">
    <property type="component" value="Chromosome"/>
</dbReference>
<dbReference type="GO" id="GO:0005886">
    <property type="term" value="C:plasma membrane"/>
    <property type="evidence" value="ECO:0007669"/>
    <property type="project" value="UniProtKB-SubCell"/>
</dbReference>
<dbReference type="GO" id="GO:0015385">
    <property type="term" value="F:sodium:proton antiporter activity"/>
    <property type="evidence" value="ECO:0007669"/>
    <property type="project" value="InterPro"/>
</dbReference>
<dbReference type="HAMAP" id="MF_01599">
    <property type="entry name" value="NhaB"/>
    <property type="match status" value="1"/>
</dbReference>
<dbReference type="InterPro" id="IPR004671">
    <property type="entry name" value="Na+/H+_antiporter_NhaB"/>
</dbReference>
<dbReference type="NCBIfam" id="TIGR00774">
    <property type="entry name" value="NhaB"/>
    <property type="match status" value="1"/>
</dbReference>
<dbReference type="NCBIfam" id="NF007093">
    <property type="entry name" value="PRK09547.1"/>
    <property type="match status" value="1"/>
</dbReference>
<dbReference type="PANTHER" id="PTHR43302:SF1">
    <property type="entry name" value="NA(+)_H(+) ANTIPORTER NHAB"/>
    <property type="match status" value="1"/>
</dbReference>
<dbReference type="PANTHER" id="PTHR43302">
    <property type="entry name" value="TRANSPORTER ARSB-RELATED"/>
    <property type="match status" value="1"/>
</dbReference>
<dbReference type="Pfam" id="PF06450">
    <property type="entry name" value="NhaB"/>
    <property type="match status" value="1"/>
</dbReference>
<evidence type="ECO:0000255" key="1">
    <source>
        <dbReference type="HAMAP-Rule" id="MF_01599"/>
    </source>
</evidence>
<proteinExistence type="inferred from homology"/>
<keyword id="KW-0050">Antiport</keyword>
<keyword id="KW-0997">Cell inner membrane</keyword>
<keyword id="KW-1003">Cell membrane</keyword>
<keyword id="KW-0406">Ion transport</keyword>
<keyword id="KW-0472">Membrane</keyword>
<keyword id="KW-0915">Sodium</keyword>
<keyword id="KW-0739">Sodium transport</keyword>
<keyword id="KW-0812">Transmembrane</keyword>
<keyword id="KW-1133">Transmembrane helix</keyword>
<keyword id="KW-0813">Transport</keyword>
<name>NHAB_SALPC</name>
<sequence length="514" mass="56526">MEISWGRAMWRNFLGQSPDWYKLALLVFLIVNPFIFLANPFIAGWLLVAEFIFTLAMALKCYPLLPGGLLAIEAVIIGMTSAAHVREEVAANLEVLLLLMFMVAGIYFMKQLLLFIFTRLLLSIRSKMVLSLAFCVAAAFLSAFLDALTVVAVVISVAVGFYGIYHRVASSRGEENDMLDDSHIDPHYKTVLEQFRGFLRSLMMHAGVGTALGGVMTMVGEPQNLIIAKAAGWHFGDFFLRMSPVTVPVLVCGLLTCMLVEKMRWFGYGETLPEKVRDVLQQFDDQSRKKRTRQDKIKLIVQAVIGVWLVTALALHLAEVGLIGLSVIILATALTGVTDEHAIGKAFTESLPFTALLTVFFSIVAVIIDQHLFAPIIQFVLQASEHAQLTLFYLFNGLLSSISDNVFVGTIYINEAKAAMENGAISLKQFELLAVAINTGTNLPSVATPNGQAAFLFLLTSALAPLIRLSYGRMVWMALPYTIVLTLIGLLCVEFTLAPATEWMTQAGWLATLS</sequence>